<sequence length="465" mass="54036">MTIHIYNTLTRQKEEFVPLEENKVKMYVCGPTVYNYIHIGNARPPMVFDTVRRYLEYKGYDVQYVSNFTDVDDKLIKAANELGEDVPTIADRFVEAYFEDVTALGCKHATVHPRVTENMDIIIEFIQELVNKGYAYESEGDVYFKTKEFEGYGKLSHQPIADLRHGARIEVGEKKQDPLDFALWKAAKEGEIFWESPWGQGRPGWHIECSAMARKYLGDTIDIHAGGQDLAFPHHENEIAQSEALTGKTFARYWMHNGYININNEKMSKSLGNFILVHDIIKQYDPQLIRFFMLSVHYRHPINFSEELLQSTNNGLERIKTAYGNLKHRMESSTDLTDHNEKWLAEIEKFQTAFEEAMNDDFNTANAITELYNVANHANQYLLEEHTSKVVIEAYVKQLETLFDILGLELSKEELLDEEIEELIQKRIEARKNRDFALSDQIRDDLKERNIILEDTAQGTRWKRG</sequence>
<protein>
    <recommendedName>
        <fullName evidence="1">Cysteine--tRNA ligase</fullName>
        <ecNumber evidence="1">6.1.1.16</ecNumber>
    </recommendedName>
    <alternativeName>
        <fullName evidence="1">Cysteinyl-tRNA synthetase</fullName>
        <shortName evidence="1">CysRS</shortName>
    </alternativeName>
</protein>
<proteinExistence type="inferred from homology"/>
<keyword id="KW-0030">Aminoacyl-tRNA synthetase</keyword>
<keyword id="KW-0067">ATP-binding</keyword>
<keyword id="KW-0963">Cytoplasm</keyword>
<keyword id="KW-0436">Ligase</keyword>
<keyword id="KW-0479">Metal-binding</keyword>
<keyword id="KW-0547">Nucleotide-binding</keyword>
<keyword id="KW-0597">Phosphoprotein</keyword>
<keyword id="KW-0648">Protein biosynthesis</keyword>
<keyword id="KW-1185">Reference proteome</keyword>
<keyword id="KW-0862">Zinc</keyword>
<organism>
    <name type="scientific">Bacillus cereus (strain ATCC 14579 / DSM 31 / CCUG 7414 / JCM 2152 / NBRC 15305 / NCIMB 9373 / NCTC 2599 / NRRL B-3711)</name>
    <dbReference type="NCBI Taxonomy" id="226900"/>
    <lineage>
        <taxon>Bacteria</taxon>
        <taxon>Bacillati</taxon>
        <taxon>Bacillota</taxon>
        <taxon>Bacilli</taxon>
        <taxon>Bacillales</taxon>
        <taxon>Bacillaceae</taxon>
        <taxon>Bacillus</taxon>
        <taxon>Bacillus cereus group</taxon>
    </lineage>
</organism>
<name>SYC_BACCR</name>
<feature type="chain" id="PRO_0000159345" description="Cysteine--tRNA ligase">
    <location>
        <begin position="1"/>
        <end position="465"/>
    </location>
</feature>
<feature type="short sequence motif" description="'HIGH' region">
    <location>
        <begin position="31"/>
        <end position="41"/>
    </location>
</feature>
<feature type="short sequence motif" description="'KMSKS' region">
    <location>
        <begin position="266"/>
        <end position="270"/>
    </location>
</feature>
<feature type="binding site" evidence="1">
    <location>
        <position position="29"/>
    </location>
    <ligand>
        <name>Zn(2+)</name>
        <dbReference type="ChEBI" id="CHEBI:29105"/>
    </ligand>
</feature>
<feature type="binding site" evidence="1">
    <location>
        <position position="209"/>
    </location>
    <ligand>
        <name>Zn(2+)</name>
        <dbReference type="ChEBI" id="CHEBI:29105"/>
    </ligand>
</feature>
<feature type="binding site" evidence="1">
    <location>
        <position position="234"/>
    </location>
    <ligand>
        <name>Zn(2+)</name>
        <dbReference type="ChEBI" id="CHEBI:29105"/>
    </ligand>
</feature>
<feature type="binding site" evidence="1">
    <location>
        <position position="238"/>
    </location>
    <ligand>
        <name>Zn(2+)</name>
        <dbReference type="ChEBI" id="CHEBI:29105"/>
    </ligand>
</feature>
<feature type="binding site" evidence="1">
    <location>
        <position position="269"/>
    </location>
    <ligand>
        <name>ATP</name>
        <dbReference type="ChEBI" id="CHEBI:30616"/>
    </ligand>
</feature>
<feature type="modified residue" description="Phosphoserine" evidence="1">
    <location>
        <position position="270"/>
    </location>
</feature>
<comment type="catalytic activity">
    <reaction evidence="1">
        <text>tRNA(Cys) + L-cysteine + ATP = L-cysteinyl-tRNA(Cys) + AMP + diphosphate</text>
        <dbReference type="Rhea" id="RHEA:17773"/>
        <dbReference type="Rhea" id="RHEA-COMP:9661"/>
        <dbReference type="Rhea" id="RHEA-COMP:9679"/>
        <dbReference type="ChEBI" id="CHEBI:30616"/>
        <dbReference type="ChEBI" id="CHEBI:33019"/>
        <dbReference type="ChEBI" id="CHEBI:35235"/>
        <dbReference type="ChEBI" id="CHEBI:78442"/>
        <dbReference type="ChEBI" id="CHEBI:78517"/>
        <dbReference type="ChEBI" id="CHEBI:456215"/>
        <dbReference type="EC" id="6.1.1.16"/>
    </reaction>
</comment>
<comment type="cofactor">
    <cofactor evidence="1">
        <name>Zn(2+)</name>
        <dbReference type="ChEBI" id="CHEBI:29105"/>
    </cofactor>
    <text evidence="1">Binds 1 zinc ion per subunit.</text>
</comment>
<comment type="subunit">
    <text evidence="1">Monomer.</text>
</comment>
<comment type="subcellular location">
    <subcellularLocation>
        <location evidence="1">Cytoplasm</location>
    </subcellularLocation>
</comment>
<comment type="similarity">
    <text evidence="1">Belongs to the class-I aminoacyl-tRNA synthetase family.</text>
</comment>
<gene>
    <name evidence="1" type="primary">cysS</name>
    <name type="ordered locus">BC_0110</name>
</gene>
<evidence type="ECO:0000255" key="1">
    <source>
        <dbReference type="HAMAP-Rule" id="MF_00041"/>
    </source>
</evidence>
<dbReference type="EC" id="6.1.1.16" evidence="1"/>
<dbReference type="EMBL" id="AE016877">
    <property type="protein sequence ID" value="AAP07192.1"/>
    <property type="molecule type" value="Genomic_DNA"/>
</dbReference>
<dbReference type="RefSeq" id="NP_829991.1">
    <property type="nucleotide sequence ID" value="NC_004722.1"/>
</dbReference>
<dbReference type="RefSeq" id="WP_000152276.1">
    <property type="nucleotide sequence ID" value="NZ_CP138336.1"/>
</dbReference>
<dbReference type="SMR" id="Q81J59"/>
<dbReference type="STRING" id="226900.BC_0110"/>
<dbReference type="KEGG" id="bce:BC0110"/>
<dbReference type="PATRIC" id="fig|226900.8.peg.112"/>
<dbReference type="HOGENOM" id="CLU_013528_0_1_9"/>
<dbReference type="OrthoDB" id="9815130at2"/>
<dbReference type="Proteomes" id="UP000001417">
    <property type="component" value="Chromosome"/>
</dbReference>
<dbReference type="GO" id="GO:0005737">
    <property type="term" value="C:cytoplasm"/>
    <property type="evidence" value="ECO:0000318"/>
    <property type="project" value="GO_Central"/>
</dbReference>
<dbReference type="GO" id="GO:0005829">
    <property type="term" value="C:cytosol"/>
    <property type="evidence" value="ECO:0000318"/>
    <property type="project" value="GO_Central"/>
</dbReference>
<dbReference type="GO" id="GO:0005524">
    <property type="term" value="F:ATP binding"/>
    <property type="evidence" value="ECO:0000318"/>
    <property type="project" value="GO_Central"/>
</dbReference>
<dbReference type="GO" id="GO:0004817">
    <property type="term" value="F:cysteine-tRNA ligase activity"/>
    <property type="evidence" value="ECO:0000318"/>
    <property type="project" value="GO_Central"/>
</dbReference>
<dbReference type="GO" id="GO:0008270">
    <property type="term" value="F:zinc ion binding"/>
    <property type="evidence" value="ECO:0007669"/>
    <property type="project" value="UniProtKB-UniRule"/>
</dbReference>
<dbReference type="GO" id="GO:0006423">
    <property type="term" value="P:cysteinyl-tRNA aminoacylation"/>
    <property type="evidence" value="ECO:0000318"/>
    <property type="project" value="GO_Central"/>
</dbReference>
<dbReference type="CDD" id="cd00672">
    <property type="entry name" value="CysRS_core"/>
    <property type="match status" value="1"/>
</dbReference>
<dbReference type="FunFam" id="1.20.120.1910:FF:000002">
    <property type="entry name" value="Cysteine--tRNA ligase"/>
    <property type="match status" value="1"/>
</dbReference>
<dbReference type="FunFam" id="3.40.50.620:FF:000009">
    <property type="entry name" value="Cysteine--tRNA ligase"/>
    <property type="match status" value="1"/>
</dbReference>
<dbReference type="Gene3D" id="1.20.120.1910">
    <property type="entry name" value="Cysteine-tRNA ligase, C-terminal anti-codon recognition domain"/>
    <property type="match status" value="1"/>
</dbReference>
<dbReference type="Gene3D" id="3.40.50.620">
    <property type="entry name" value="HUPs"/>
    <property type="match status" value="1"/>
</dbReference>
<dbReference type="HAMAP" id="MF_00041">
    <property type="entry name" value="Cys_tRNA_synth"/>
    <property type="match status" value="1"/>
</dbReference>
<dbReference type="InterPro" id="IPR015803">
    <property type="entry name" value="Cys-tRNA-ligase"/>
</dbReference>
<dbReference type="InterPro" id="IPR015273">
    <property type="entry name" value="Cys-tRNA-synt_Ia_DALR"/>
</dbReference>
<dbReference type="InterPro" id="IPR024909">
    <property type="entry name" value="Cys-tRNA/MSH_ligase"/>
</dbReference>
<dbReference type="InterPro" id="IPR014729">
    <property type="entry name" value="Rossmann-like_a/b/a_fold"/>
</dbReference>
<dbReference type="InterPro" id="IPR032678">
    <property type="entry name" value="tRNA-synt_1_cat_dom"/>
</dbReference>
<dbReference type="InterPro" id="IPR009080">
    <property type="entry name" value="tRNAsynth_Ia_anticodon-bd"/>
</dbReference>
<dbReference type="NCBIfam" id="TIGR00435">
    <property type="entry name" value="cysS"/>
    <property type="match status" value="1"/>
</dbReference>
<dbReference type="PANTHER" id="PTHR10890:SF3">
    <property type="entry name" value="CYSTEINE--TRNA LIGASE, CYTOPLASMIC"/>
    <property type="match status" value="1"/>
</dbReference>
<dbReference type="PANTHER" id="PTHR10890">
    <property type="entry name" value="CYSTEINYL-TRNA SYNTHETASE"/>
    <property type="match status" value="1"/>
</dbReference>
<dbReference type="Pfam" id="PF09190">
    <property type="entry name" value="DALR_2"/>
    <property type="match status" value="1"/>
</dbReference>
<dbReference type="Pfam" id="PF01406">
    <property type="entry name" value="tRNA-synt_1e"/>
    <property type="match status" value="1"/>
</dbReference>
<dbReference type="PRINTS" id="PR00983">
    <property type="entry name" value="TRNASYNTHCYS"/>
</dbReference>
<dbReference type="SMART" id="SM00840">
    <property type="entry name" value="DALR_2"/>
    <property type="match status" value="1"/>
</dbReference>
<dbReference type="SUPFAM" id="SSF47323">
    <property type="entry name" value="Anticodon-binding domain of a subclass of class I aminoacyl-tRNA synthetases"/>
    <property type="match status" value="1"/>
</dbReference>
<dbReference type="SUPFAM" id="SSF52374">
    <property type="entry name" value="Nucleotidylyl transferase"/>
    <property type="match status" value="1"/>
</dbReference>
<accession>Q81J59</accession>
<reference key="1">
    <citation type="journal article" date="2003" name="Nature">
        <title>Genome sequence of Bacillus cereus and comparative analysis with Bacillus anthracis.</title>
        <authorList>
            <person name="Ivanova N."/>
            <person name="Sorokin A."/>
            <person name="Anderson I."/>
            <person name="Galleron N."/>
            <person name="Candelon B."/>
            <person name="Kapatral V."/>
            <person name="Bhattacharyya A."/>
            <person name="Reznik G."/>
            <person name="Mikhailova N."/>
            <person name="Lapidus A."/>
            <person name="Chu L."/>
            <person name="Mazur M."/>
            <person name="Goltsman E."/>
            <person name="Larsen N."/>
            <person name="D'Souza M."/>
            <person name="Walunas T."/>
            <person name="Grechkin Y."/>
            <person name="Pusch G."/>
            <person name="Haselkorn R."/>
            <person name="Fonstein M."/>
            <person name="Ehrlich S.D."/>
            <person name="Overbeek R."/>
            <person name="Kyrpides N.C."/>
        </authorList>
    </citation>
    <scope>NUCLEOTIDE SEQUENCE [LARGE SCALE GENOMIC DNA]</scope>
    <source>
        <strain>ATCC 14579 / DSM 31 / CCUG 7414 / JCM 2152 / NBRC 15305 / NCIMB 9373 / NCTC 2599 / NRRL B-3711</strain>
    </source>
</reference>